<evidence type="ECO:0000255" key="1"/>
<evidence type="ECO:0000305" key="2"/>
<dbReference type="EMBL" id="AE016795">
    <property type="protein sequence ID" value="AAO11483.2"/>
    <property type="molecule type" value="Genomic_DNA"/>
</dbReference>
<dbReference type="RefSeq" id="WP_011080959.1">
    <property type="nucleotide sequence ID" value="NC_004459.3"/>
</dbReference>
<dbReference type="KEGG" id="vvu:VV1_3166"/>
<dbReference type="HOGENOM" id="CLU_033541_2_0_6"/>
<dbReference type="Proteomes" id="UP000002275">
    <property type="component" value="Chromosome 1"/>
</dbReference>
<dbReference type="GO" id="GO:0005886">
    <property type="term" value="C:plasma membrane"/>
    <property type="evidence" value="ECO:0007669"/>
    <property type="project" value="UniProtKB-SubCell"/>
</dbReference>
<dbReference type="InterPro" id="IPR018383">
    <property type="entry name" value="UPF0324_pro"/>
</dbReference>
<dbReference type="PANTHER" id="PTHR30106">
    <property type="entry name" value="INNER MEMBRANE PROTEIN YEIH-RELATED"/>
    <property type="match status" value="1"/>
</dbReference>
<dbReference type="PANTHER" id="PTHR30106:SF1">
    <property type="entry name" value="UPF0324 MEMBRANE PROTEIN FN0533"/>
    <property type="match status" value="1"/>
</dbReference>
<dbReference type="Pfam" id="PF03601">
    <property type="entry name" value="Cons_hypoth698"/>
    <property type="match status" value="1"/>
</dbReference>
<organism>
    <name type="scientific">Vibrio vulnificus (strain CMCP6)</name>
    <dbReference type="NCBI Taxonomy" id="216895"/>
    <lineage>
        <taxon>Bacteria</taxon>
        <taxon>Pseudomonadati</taxon>
        <taxon>Pseudomonadota</taxon>
        <taxon>Gammaproteobacteria</taxon>
        <taxon>Vibrionales</taxon>
        <taxon>Vibrionaceae</taxon>
        <taxon>Vibrio</taxon>
    </lineage>
</organism>
<reference key="1">
    <citation type="submission" date="2002-12" db="EMBL/GenBank/DDBJ databases">
        <title>Complete genome sequence of Vibrio vulnificus CMCP6.</title>
        <authorList>
            <person name="Rhee J.H."/>
            <person name="Kim S.Y."/>
            <person name="Chung S.S."/>
            <person name="Kim J.J."/>
            <person name="Moon Y.H."/>
            <person name="Jeong H."/>
            <person name="Choy H.E."/>
        </authorList>
    </citation>
    <scope>NUCLEOTIDE SEQUENCE [LARGE SCALE GENOMIC DNA]</scope>
    <source>
        <strain>CMCP6</strain>
    </source>
</reference>
<comment type="subcellular location">
    <subcellularLocation>
        <location evidence="2">Cell membrane</location>
        <topology evidence="2">Multi-pass membrane protein</topology>
    </subcellularLocation>
</comment>
<comment type="similarity">
    <text evidence="2">Belongs to the UPF0324 family.</text>
</comment>
<accession>Q8D825</accession>
<protein>
    <recommendedName>
        <fullName>UPF0324 membrane protein VV1_3166</fullName>
    </recommendedName>
</protein>
<sequence>MNRKHLPFIFALLLCLSPWVSSPTALVLGFLLASTGLVPSQLPISTYTKKLLSYSIIGLGFGIQFQQAIAVTSDGIGLIVVTIAGTLLLGFLVAKVIKLETTTAYLISAGTAICGGSAIAAVAPAIKAKDQQIALALATVFVLNSLALFIFPVIGHALALDQQTFGTWAAIAIHDTSSVVGAASAYGEQALTTATTLKLARALWIIPVALLSAILFARGNGEEGKRKLVLPYFIFWYCAAIAFSDLFPQFESVYQGIFSVAKQALVVCLFLIGCSISVEKLKSAGAKPLIFGLSLWVVISTTSLSWLLLTR</sequence>
<gene>
    <name type="ordered locus">VV1_3166</name>
</gene>
<keyword id="KW-1003">Cell membrane</keyword>
<keyword id="KW-0472">Membrane</keyword>
<keyword id="KW-0812">Transmembrane</keyword>
<keyword id="KW-1133">Transmembrane helix</keyword>
<name>Y3166_VIBVU</name>
<feature type="chain" id="PRO_0000157469" description="UPF0324 membrane protein VV1_3166">
    <location>
        <begin position="1"/>
        <end position="311"/>
    </location>
</feature>
<feature type="transmembrane region" description="Helical" evidence="1">
    <location>
        <begin position="8"/>
        <end position="28"/>
    </location>
</feature>
<feature type="transmembrane region" description="Helical" evidence="1">
    <location>
        <begin position="51"/>
        <end position="71"/>
    </location>
</feature>
<feature type="transmembrane region" description="Helical" evidence="1">
    <location>
        <begin position="74"/>
        <end position="94"/>
    </location>
</feature>
<feature type="transmembrane region" description="Helical" evidence="1">
    <location>
        <begin position="106"/>
        <end position="126"/>
    </location>
</feature>
<feature type="transmembrane region" description="Helical" evidence="1">
    <location>
        <begin position="133"/>
        <end position="153"/>
    </location>
</feature>
<feature type="transmembrane region" description="Helical" evidence="1">
    <location>
        <begin position="165"/>
        <end position="185"/>
    </location>
</feature>
<feature type="transmembrane region" description="Helical" evidence="1">
    <location>
        <begin position="197"/>
        <end position="217"/>
    </location>
</feature>
<feature type="transmembrane region" description="Helical" evidence="1">
    <location>
        <begin position="228"/>
        <end position="248"/>
    </location>
</feature>
<feature type="transmembrane region" description="Helical" evidence="1">
    <location>
        <begin position="256"/>
        <end position="276"/>
    </location>
</feature>
<feature type="transmembrane region" description="Helical" evidence="1">
    <location>
        <begin position="289"/>
        <end position="309"/>
    </location>
</feature>
<proteinExistence type="inferred from homology"/>